<comment type="function">
    <text>Tubulin is the major constituent of microtubules, a cylinder consisting of laterally associated linear protofilaments composed of alpha- and beta-tubulin heterodimers. Microtubules grow by the addition of GTP-tubulin dimers to the microtubule end, where a stabilizing cap forms. Below the cap, tubulin dimers are in GDP-bound state, owing to GTPase activity of alpha-tubulin.</text>
</comment>
<comment type="cofactor">
    <cofactor evidence="1">
        <name>Mg(2+)</name>
        <dbReference type="ChEBI" id="CHEBI:18420"/>
    </cofactor>
</comment>
<comment type="subunit">
    <text>Dimer of alpha and beta chains. A typical microtubule is a hollow water-filled tube with an outer diameter of 25 nm and an inner diameter of 15 nM. Alpha-beta heterodimers associate head-to-tail to form protofilaments running lengthwise along the microtubule wall with the beta-tubulin subunit facing the microtubule plus end conferring a structural polarity. Microtubules usually have 13 protofilaments but different protofilament numbers can be found in some organisms and specialized cells.</text>
</comment>
<comment type="subcellular location">
    <subcellularLocation>
        <location>Cytoplasm</location>
        <location>Cytoskeleton</location>
    </subcellularLocation>
</comment>
<comment type="similarity">
    <text evidence="4">Belongs to the tubulin family.</text>
</comment>
<keyword id="KW-0963">Cytoplasm</keyword>
<keyword id="KW-0206">Cytoskeleton</keyword>
<keyword id="KW-0342">GTP-binding</keyword>
<keyword id="KW-0460">Magnesium</keyword>
<keyword id="KW-0479">Metal-binding</keyword>
<keyword id="KW-0493">Microtubule</keyword>
<keyword id="KW-0547">Nucleotide-binding</keyword>
<protein>
    <recommendedName>
        <fullName>Tubulin beta chain</fullName>
    </recommendedName>
    <alternativeName>
        <fullName>Beta-tubulin</fullName>
    </alternativeName>
</protein>
<feature type="chain" id="PRO_0000048295" description="Tubulin beta chain">
    <location>
        <begin position="1"/>
        <end position="444"/>
    </location>
</feature>
<feature type="region of interest" description="Disordered" evidence="3">
    <location>
        <begin position="423"/>
        <end position="444"/>
    </location>
</feature>
<feature type="compositionally biased region" description="Acidic residues" evidence="3">
    <location>
        <begin position="429"/>
        <end position="444"/>
    </location>
</feature>
<feature type="binding site" evidence="2">
    <location>
        <position position="11"/>
    </location>
    <ligand>
        <name>GTP</name>
        <dbReference type="ChEBI" id="CHEBI:37565"/>
    </ligand>
</feature>
<feature type="binding site" evidence="1">
    <location>
        <position position="69"/>
    </location>
    <ligand>
        <name>GTP</name>
        <dbReference type="ChEBI" id="CHEBI:37565"/>
    </ligand>
</feature>
<feature type="binding site" evidence="1">
    <location>
        <position position="69"/>
    </location>
    <ligand>
        <name>Mg(2+)</name>
        <dbReference type="ChEBI" id="CHEBI:18420"/>
    </ligand>
</feature>
<feature type="binding site" evidence="2">
    <location>
        <position position="138"/>
    </location>
    <ligand>
        <name>GTP</name>
        <dbReference type="ChEBI" id="CHEBI:37565"/>
    </ligand>
</feature>
<feature type="binding site" evidence="2">
    <location>
        <position position="142"/>
    </location>
    <ligand>
        <name>GTP</name>
        <dbReference type="ChEBI" id="CHEBI:37565"/>
    </ligand>
</feature>
<feature type="binding site" evidence="2">
    <location>
        <position position="143"/>
    </location>
    <ligand>
        <name>GTP</name>
        <dbReference type="ChEBI" id="CHEBI:37565"/>
    </ligand>
</feature>
<feature type="binding site" evidence="2">
    <location>
        <position position="144"/>
    </location>
    <ligand>
        <name>GTP</name>
        <dbReference type="ChEBI" id="CHEBI:37565"/>
    </ligand>
</feature>
<feature type="binding site" evidence="2">
    <location>
        <position position="204"/>
    </location>
    <ligand>
        <name>GTP</name>
        <dbReference type="ChEBI" id="CHEBI:37565"/>
    </ligand>
</feature>
<feature type="binding site" evidence="2">
    <location>
        <position position="226"/>
    </location>
    <ligand>
        <name>GTP</name>
        <dbReference type="ChEBI" id="CHEBI:37565"/>
    </ligand>
</feature>
<accession>Q9N2N6</accession>
<name>TBB_EUPFO</name>
<proteinExistence type="inferred from homology"/>
<reference key="1">
    <citation type="journal article" date="1994" name="J. Eukaryot. Microbiol.">
        <title>Identification of the tubulin gene family and sequence determination of one beta-tubulin gene in a cold-poikilotherm protozoan, the antarctic ciliate Euplotes focardii.</title>
        <authorList>
            <person name="Miceli C."/>
            <person name="Ballarini P."/>
            <person name="Di Giuseppe G."/>
            <person name="Valbonesi A."/>
            <person name="Luporini P."/>
        </authorList>
    </citation>
    <scope>NUCLEOTIDE SEQUENCE [GENOMIC DNA]</scope>
    <source>
        <strain>TN1</strain>
    </source>
</reference>
<evidence type="ECO:0000250" key="1">
    <source>
        <dbReference type="UniProtKB" id="P68363"/>
    </source>
</evidence>
<evidence type="ECO:0000250" key="2">
    <source>
        <dbReference type="UniProtKB" id="Q13509"/>
    </source>
</evidence>
<evidence type="ECO:0000256" key="3">
    <source>
        <dbReference type="SAM" id="MobiDB-lite"/>
    </source>
</evidence>
<evidence type="ECO:0000305" key="4"/>
<sequence length="444" mass="49807">MREIVHIQAGQCGNQIGAKFWEVISDEHGVDPTGTYHGDSDLQLERINVYFNEATGRKICPRAMLMDLEPGTMDSVRAGPFGQLFRPDNFVFGQSGAGNNWAKGHYTEGAELIDSVLDVVRKEAEGCDCLQGFQITHSLGGGTGSGMGTLLISKIREKYPDRIMETFSVFPSPKVSDTVVEPYNATLSVHQLVENADEVMCIDNEALYDICFRTLKPTTPTYGDLNHLVSAVISGVTSCLRFPGQLNSDLRKLAVNLIPFPRLHFFMIGFAPLTSRGSQQYRALTVPELTQQMFDAKNMMCASDPRHGRYLTASAMFRGRMSTKEVDEQMLNVQNKNSSYFVEWIPNNIKSSVCDIPPKGLKMSSTFIGNSTAIQEMFKRVAEQFTAMFRRKAFLHWYTGEGMDEMEFTEAESNMNDLVSEYQQYQDATAEEEGEFDDEEEMDV</sequence>
<organism>
    <name type="scientific">Euplotes focardii</name>
    <dbReference type="NCBI Taxonomy" id="36767"/>
    <lineage>
        <taxon>Eukaryota</taxon>
        <taxon>Sar</taxon>
        <taxon>Alveolata</taxon>
        <taxon>Ciliophora</taxon>
        <taxon>Intramacronucleata</taxon>
        <taxon>Spirotrichea</taxon>
        <taxon>Hypotrichia</taxon>
        <taxon>Euplotida</taxon>
        <taxon>Euplotidae</taxon>
        <taxon>Euplotes</taxon>
    </lineage>
</organism>
<dbReference type="EMBL" id="S72098">
    <property type="protein sequence ID" value="AAB31932.1"/>
    <property type="molecule type" value="Genomic_DNA"/>
</dbReference>
<dbReference type="SMR" id="Q9N2N6"/>
<dbReference type="GO" id="GO:0005737">
    <property type="term" value="C:cytoplasm"/>
    <property type="evidence" value="ECO:0007669"/>
    <property type="project" value="UniProtKB-KW"/>
</dbReference>
<dbReference type="GO" id="GO:0005874">
    <property type="term" value="C:microtubule"/>
    <property type="evidence" value="ECO:0007669"/>
    <property type="project" value="UniProtKB-KW"/>
</dbReference>
<dbReference type="GO" id="GO:0005525">
    <property type="term" value="F:GTP binding"/>
    <property type="evidence" value="ECO:0007669"/>
    <property type="project" value="UniProtKB-KW"/>
</dbReference>
<dbReference type="GO" id="GO:0003924">
    <property type="term" value="F:GTPase activity"/>
    <property type="evidence" value="ECO:0007669"/>
    <property type="project" value="InterPro"/>
</dbReference>
<dbReference type="GO" id="GO:0046872">
    <property type="term" value="F:metal ion binding"/>
    <property type="evidence" value="ECO:0007669"/>
    <property type="project" value="UniProtKB-KW"/>
</dbReference>
<dbReference type="GO" id="GO:0005200">
    <property type="term" value="F:structural constituent of cytoskeleton"/>
    <property type="evidence" value="ECO:0007669"/>
    <property type="project" value="InterPro"/>
</dbReference>
<dbReference type="GO" id="GO:0007017">
    <property type="term" value="P:microtubule-based process"/>
    <property type="evidence" value="ECO:0007669"/>
    <property type="project" value="InterPro"/>
</dbReference>
<dbReference type="CDD" id="cd02187">
    <property type="entry name" value="beta_tubulin"/>
    <property type="match status" value="1"/>
</dbReference>
<dbReference type="FunFam" id="1.10.287.600:FF:000002">
    <property type="entry name" value="Tubulin beta chain"/>
    <property type="match status" value="1"/>
</dbReference>
<dbReference type="FunFam" id="3.30.1330.20:FF:000002">
    <property type="entry name" value="Tubulin beta chain"/>
    <property type="match status" value="1"/>
</dbReference>
<dbReference type="FunFam" id="3.40.50.1440:FF:000003">
    <property type="entry name" value="Tubulin beta chain"/>
    <property type="match status" value="1"/>
</dbReference>
<dbReference type="Gene3D" id="1.10.287.600">
    <property type="entry name" value="Helix hairpin bin"/>
    <property type="match status" value="1"/>
</dbReference>
<dbReference type="Gene3D" id="3.30.1330.20">
    <property type="entry name" value="Tubulin/FtsZ, C-terminal domain"/>
    <property type="match status" value="1"/>
</dbReference>
<dbReference type="Gene3D" id="3.40.50.1440">
    <property type="entry name" value="Tubulin/FtsZ, GTPase domain"/>
    <property type="match status" value="1"/>
</dbReference>
<dbReference type="InterPro" id="IPR013838">
    <property type="entry name" value="Beta-tubulin_BS"/>
</dbReference>
<dbReference type="InterPro" id="IPR002453">
    <property type="entry name" value="Beta_tubulin"/>
</dbReference>
<dbReference type="InterPro" id="IPR008280">
    <property type="entry name" value="Tub_FtsZ_C"/>
</dbReference>
<dbReference type="InterPro" id="IPR000217">
    <property type="entry name" value="Tubulin"/>
</dbReference>
<dbReference type="InterPro" id="IPR037103">
    <property type="entry name" value="Tubulin/FtsZ-like_C"/>
</dbReference>
<dbReference type="InterPro" id="IPR018316">
    <property type="entry name" value="Tubulin/FtsZ_2-layer-sand-dom"/>
</dbReference>
<dbReference type="InterPro" id="IPR036525">
    <property type="entry name" value="Tubulin/FtsZ_GTPase_sf"/>
</dbReference>
<dbReference type="InterPro" id="IPR023123">
    <property type="entry name" value="Tubulin_C"/>
</dbReference>
<dbReference type="InterPro" id="IPR017975">
    <property type="entry name" value="Tubulin_CS"/>
</dbReference>
<dbReference type="InterPro" id="IPR003008">
    <property type="entry name" value="Tubulin_FtsZ_GTPase"/>
</dbReference>
<dbReference type="PANTHER" id="PTHR11588">
    <property type="entry name" value="TUBULIN"/>
    <property type="match status" value="1"/>
</dbReference>
<dbReference type="Pfam" id="PF00091">
    <property type="entry name" value="Tubulin"/>
    <property type="match status" value="1"/>
</dbReference>
<dbReference type="Pfam" id="PF03953">
    <property type="entry name" value="Tubulin_C"/>
    <property type="match status" value="1"/>
</dbReference>
<dbReference type="PRINTS" id="PR01163">
    <property type="entry name" value="BETATUBULIN"/>
</dbReference>
<dbReference type="PRINTS" id="PR01161">
    <property type="entry name" value="TUBULIN"/>
</dbReference>
<dbReference type="SMART" id="SM00864">
    <property type="entry name" value="Tubulin"/>
    <property type="match status" value="1"/>
</dbReference>
<dbReference type="SMART" id="SM00865">
    <property type="entry name" value="Tubulin_C"/>
    <property type="match status" value="1"/>
</dbReference>
<dbReference type="SUPFAM" id="SSF55307">
    <property type="entry name" value="Tubulin C-terminal domain-like"/>
    <property type="match status" value="1"/>
</dbReference>
<dbReference type="SUPFAM" id="SSF52490">
    <property type="entry name" value="Tubulin nucleotide-binding domain-like"/>
    <property type="match status" value="1"/>
</dbReference>
<dbReference type="PROSITE" id="PS00227">
    <property type="entry name" value="TUBULIN"/>
    <property type="match status" value="1"/>
</dbReference>
<dbReference type="PROSITE" id="PS00228">
    <property type="entry name" value="TUBULIN_B_AUTOREG"/>
    <property type="match status" value="1"/>
</dbReference>